<name>FLUC1_NATPD</name>
<keyword id="KW-1003">Cell membrane</keyword>
<keyword id="KW-0407">Ion channel</keyword>
<keyword id="KW-0406">Ion transport</keyword>
<keyword id="KW-0472">Membrane</keyword>
<keyword id="KW-1185">Reference proteome</keyword>
<keyword id="KW-0812">Transmembrane</keyword>
<keyword id="KW-1133">Transmembrane helix</keyword>
<keyword id="KW-0813">Transport</keyword>
<dbReference type="EMBL" id="CR936257">
    <property type="protein sequence ID" value="CAI48103.1"/>
    <property type="molecule type" value="Genomic_DNA"/>
</dbReference>
<dbReference type="RefSeq" id="WP_011321742.1">
    <property type="nucleotide sequence ID" value="NC_007426.1"/>
</dbReference>
<dbReference type="SMR" id="Q3IUS7"/>
<dbReference type="STRING" id="348780.NP_0024A"/>
<dbReference type="EnsemblBacteria" id="CAI48103">
    <property type="protein sequence ID" value="CAI48103"/>
    <property type="gene ID" value="NP_0024A"/>
</dbReference>
<dbReference type="GeneID" id="3702631"/>
<dbReference type="KEGG" id="nph:NP_0024A"/>
<dbReference type="eggNOG" id="arCOG04701">
    <property type="taxonomic scope" value="Archaea"/>
</dbReference>
<dbReference type="HOGENOM" id="CLU_114342_1_4_2"/>
<dbReference type="OrthoDB" id="253428at2157"/>
<dbReference type="Proteomes" id="UP000002698">
    <property type="component" value="Chromosome"/>
</dbReference>
<dbReference type="GO" id="GO:0005886">
    <property type="term" value="C:plasma membrane"/>
    <property type="evidence" value="ECO:0007669"/>
    <property type="project" value="UniProtKB-SubCell"/>
</dbReference>
<dbReference type="GO" id="GO:0062054">
    <property type="term" value="F:fluoride channel activity"/>
    <property type="evidence" value="ECO:0007669"/>
    <property type="project" value="UniProtKB-UniRule"/>
</dbReference>
<dbReference type="GO" id="GO:0140114">
    <property type="term" value="P:cellular detoxification of fluoride"/>
    <property type="evidence" value="ECO:0007669"/>
    <property type="project" value="UniProtKB-UniRule"/>
</dbReference>
<dbReference type="HAMAP" id="MF_00454">
    <property type="entry name" value="FluC"/>
    <property type="match status" value="1"/>
</dbReference>
<dbReference type="InterPro" id="IPR003691">
    <property type="entry name" value="FluC"/>
</dbReference>
<dbReference type="PANTHER" id="PTHR28259">
    <property type="entry name" value="FLUORIDE EXPORT PROTEIN 1-RELATED"/>
    <property type="match status" value="1"/>
</dbReference>
<dbReference type="PANTHER" id="PTHR28259:SF1">
    <property type="entry name" value="FLUORIDE EXPORT PROTEIN 1-RELATED"/>
    <property type="match status" value="1"/>
</dbReference>
<dbReference type="Pfam" id="PF02537">
    <property type="entry name" value="CRCB"/>
    <property type="match status" value="1"/>
</dbReference>
<feature type="chain" id="PRO_0000252967" description="Fluoride-specific ion channel FluC 1">
    <location>
        <begin position="1"/>
        <end position="119"/>
    </location>
</feature>
<feature type="transmembrane region" description="Helical" evidence="1">
    <location>
        <begin position="6"/>
        <end position="26"/>
    </location>
</feature>
<feature type="transmembrane region" description="Helical" evidence="1">
    <location>
        <begin position="31"/>
        <end position="51"/>
    </location>
</feature>
<feature type="transmembrane region" description="Helical" evidence="1">
    <location>
        <begin position="66"/>
        <end position="86"/>
    </location>
</feature>
<feature type="transmembrane region" description="Helical" evidence="1">
    <location>
        <begin position="91"/>
        <end position="111"/>
    </location>
</feature>
<accession>Q3IUS7</accession>
<evidence type="ECO:0000255" key="1">
    <source>
        <dbReference type="HAMAP-Rule" id="MF_00454"/>
    </source>
</evidence>
<proteinExistence type="inferred from homology"/>
<protein>
    <recommendedName>
        <fullName evidence="1">Fluoride-specific ion channel FluC 1</fullName>
    </recommendedName>
</protein>
<comment type="function">
    <text evidence="1">Fluoride-specific ion channel. Important for reducing fluoride concentration in the cell, thus reducing its toxicity.</text>
</comment>
<comment type="catalytic activity">
    <reaction evidence="1">
        <text>fluoride(in) = fluoride(out)</text>
        <dbReference type="Rhea" id="RHEA:76159"/>
        <dbReference type="ChEBI" id="CHEBI:17051"/>
    </reaction>
    <physiologicalReaction direction="left-to-right" evidence="1">
        <dbReference type="Rhea" id="RHEA:76160"/>
    </physiologicalReaction>
</comment>
<comment type="subcellular location">
    <subcellularLocation>
        <location evidence="1">Cell membrane</location>
        <topology evidence="1">Multi-pass membrane protein</topology>
    </subcellularLocation>
</comment>
<comment type="similarity">
    <text evidence="1">Belongs to the fluoride channel Fluc/FEX (TC 1.A.43) family.</text>
</comment>
<organism>
    <name type="scientific">Natronomonas pharaonis (strain ATCC 35678 / DSM 2160 / CIP 103997 / JCM 8858 / NBRC 14720 / NCIMB 2260 / Gabara)</name>
    <name type="common">Halobacterium pharaonis</name>
    <dbReference type="NCBI Taxonomy" id="348780"/>
    <lineage>
        <taxon>Archaea</taxon>
        <taxon>Methanobacteriati</taxon>
        <taxon>Methanobacteriota</taxon>
        <taxon>Stenosarchaea group</taxon>
        <taxon>Halobacteria</taxon>
        <taxon>Halobacteriales</taxon>
        <taxon>Haloarculaceae</taxon>
        <taxon>Natronomonas</taxon>
    </lineage>
</organism>
<reference key="1">
    <citation type="journal article" date="2005" name="Genome Res.">
        <title>Living with two extremes: conclusions from the genome sequence of Natronomonas pharaonis.</title>
        <authorList>
            <person name="Falb M."/>
            <person name="Pfeiffer F."/>
            <person name="Palm P."/>
            <person name="Rodewald K."/>
            <person name="Hickmann V."/>
            <person name="Tittor J."/>
            <person name="Oesterhelt D."/>
        </authorList>
    </citation>
    <scope>NUCLEOTIDE SEQUENCE [LARGE SCALE GENOMIC DNA]</scope>
    <source>
        <strain>ATCC 35678 / DSM 2160 / CIP 103997 / JCM 8858 / NBRC 14720 / NCIMB 2260 / Gabara</strain>
    </source>
</reference>
<sequence>MKPRAVALVAGGGFAGALCRHGIAVVLPGTFPWGTLVVNVAGAFLLGAIVYGTERLRSVPESTRLVVATGFLSSFTTYSTFAGETIALAPRLAALNVVGNYALGFVAVLVAREVIRWRS</sequence>
<gene>
    <name evidence="1" type="primary">fluC1</name>
    <name evidence="1" type="synonym">crcB1</name>
    <name type="ordered locus">NP_0024A</name>
</gene>